<evidence type="ECO:0000255" key="1">
    <source>
        <dbReference type="HAMAP-Rule" id="MF_00115"/>
    </source>
</evidence>
<sequence>MLKEFKEFALKGNVLDLAVAVVMGAAFNKIVTALVSYIIMPLIGLIFGTVDFAESWSFMGIKYGMFVQSIIDFIIIAFALFIFVKIANTLMKKEEEEEIEENTVLLTEIRDLLREKN</sequence>
<reference key="1">
    <citation type="journal article" date="2005" name="Proc. Natl. Acad. Sci. U.S.A.">
        <title>Whole genome sequence of Staphylococcus saprophyticus reveals the pathogenesis of uncomplicated urinary tract infection.</title>
        <authorList>
            <person name="Kuroda M."/>
            <person name="Yamashita A."/>
            <person name="Hirakawa H."/>
            <person name="Kumano M."/>
            <person name="Morikawa K."/>
            <person name="Higashide M."/>
            <person name="Maruyama A."/>
            <person name="Inose Y."/>
            <person name="Matoba K."/>
            <person name="Toh H."/>
            <person name="Kuhara S."/>
            <person name="Hattori M."/>
            <person name="Ohta T."/>
        </authorList>
    </citation>
    <scope>NUCLEOTIDE SEQUENCE [LARGE SCALE GENOMIC DNA]</scope>
    <source>
        <strain>ATCC 15305 / DSM 20229 / NCIMB 8711 / NCTC 7292 / S-41</strain>
    </source>
</reference>
<dbReference type="EMBL" id="AP008934">
    <property type="protein sequence ID" value="BAE18555.1"/>
    <property type="molecule type" value="Genomic_DNA"/>
</dbReference>
<dbReference type="RefSeq" id="WP_011303182.1">
    <property type="nucleotide sequence ID" value="NZ_MTGA01000038.1"/>
</dbReference>
<dbReference type="SMR" id="Q49XE2"/>
<dbReference type="GeneID" id="3615349"/>
<dbReference type="KEGG" id="ssp:SSP1410"/>
<dbReference type="PATRIC" id="fig|342451.11.peg.1413"/>
<dbReference type="eggNOG" id="COG1970">
    <property type="taxonomic scope" value="Bacteria"/>
</dbReference>
<dbReference type="HOGENOM" id="CLU_095787_0_0_9"/>
<dbReference type="OrthoDB" id="9810350at2"/>
<dbReference type="Proteomes" id="UP000006371">
    <property type="component" value="Chromosome"/>
</dbReference>
<dbReference type="GO" id="GO:0005886">
    <property type="term" value="C:plasma membrane"/>
    <property type="evidence" value="ECO:0007669"/>
    <property type="project" value="UniProtKB-SubCell"/>
</dbReference>
<dbReference type="GO" id="GO:0008381">
    <property type="term" value="F:mechanosensitive monoatomic ion channel activity"/>
    <property type="evidence" value="ECO:0007669"/>
    <property type="project" value="UniProtKB-UniRule"/>
</dbReference>
<dbReference type="Gene3D" id="1.10.1200.120">
    <property type="entry name" value="Large-conductance mechanosensitive channel, MscL, domain 1"/>
    <property type="match status" value="1"/>
</dbReference>
<dbReference type="HAMAP" id="MF_00115">
    <property type="entry name" value="MscL"/>
    <property type="match status" value="1"/>
</dbReference>
<dbReference type="InterPro" id="IPR019823">
    <property type="entry name" value="Mechanosensitive_channel_CS"/>
</dbReference>
<dbReference type="InterPro" id="IPR001185">
    <property type="entry name" value="MS_channel"/>
</dbReference>
<dbReference type="InterPro" id="IPR037673">
    <property type="entry name" value="MSC/AndL"/>
</dbReference>
<dbReference type="InterPro" id="IPR036019">
    <property type="entry name" value="MscL_channel"/>
</dbReference>
<dbReference type="NCBIfam" id="TIGR00220">
    <property type="entry name" value="mscL"/>
    <property type="match status" value="1"/>
</dbReference>
<dbReference type="NCBIfam" id="NF010559">
    <property type="entry name" value="PRK13954.1"/>
    <property type="match status" value="1"/>
</dbReference>
<dbReference type="PANTHER" id="PTHR30266:SF2">
    <property type="entry name" value="LARGE-CONDUCTANCE MECHANOSENSITIVE CHANNEL"/>
    <property type="match status" value="1"/>
</dbReference>
<dbReference type="PANTHER" id="PTHR30266">
    <property type="entry name" value="MECHANOSENSITIVE CHANNEL MSCL"/>
    <property type="match status" value="1"/>
</dbReference>
<dbReference type="Pfam" id="PF01741">
    <property type="entry name" value="MscL"/>
    <property type="match status" value="1"/>
</dbReference>
<dbReference type="PRINTS" id="PR01264">
    <property type="entry name" value="MECHCHANNEL"/>
</dbReference>
<dbReference type="SUPFAM" id="SSF81330">
    <property type="entry name" value="Gated mechanosensitive channel"/>
    <property type="match status" value="1"/>
</dbReference>
<dbReference type="PROSITE" id="PS01327">
    <property type="entry name" value="MSCL"/>
    <property type="match status" value="1"/>
</dbReference>
<gene>
    <name evidence="1" type="primary">mscL</name>
    <name type="ordered locus">SSP1410</name>
</gene>
<keyword id="KW-1003">Cell membrane</keyword>
<keyword id="KW-0407">Ion channel</keyword>
<keyword id="KW-0406">Ion transport</keyword>
<keyword id="KW-0472">Membrane</keyword>
<keyword id="KW-1185">Reference proteome</keyword>
<keyword id="KW-0812">Transmembrane</keyword>
<keyword id="KW-1133">Transmembrane helix</keyword>
<keyword id="KW-0813">Transport</keyword>
<organism>
    <name type="scientific">Staphylococcus saprophyticus subsp. saprophyticus (strain ATCC 15305 / DSM 20229 / NCIMB 8711 / NCTC 7292 / S-41)</name>
    <dbReference type="NCBI Taxonomy" id="342451"/>
    <lineage>
        <taxon>Bacteria</taxon>
        <taxon>Bacillati</taxon>
        <taxon>Bacillota</taxon>
        <taxon>Bacilli</taxon>
        <taxon>Bacillales</taxon>
        <taxon>Staphylococcaceae</taxon>
        <taxon>Staphylococcus</taxon>
    </lineage>
</organism>
<protein>
    <recommendedName>
        <fullName evidence="1">Large-conductance mechanosensitive channel</fullName>
    </recommendedName>
</protein>
<name>MSCL_STAS1</name>
<feature type="chain" id="PRO_0000238041" description="Large-conductance mechanosensitive channel">
    <location>
        <begin position="1"/>
        <end position="117"/>
    </location>
</feature>
<feature type="transmembrane region" description="Helical" evidence="1">
    <location>
        <begin position="7"/>
        <end position="27"/>
    </location>
</feature>
<feature type="transmembrane region" description="Helical" evidence="1">
    <location>
        <begin position="30"/>
        <end position="50"/>
    </location>
</feature>
<feature type="transmembrane region" description="Helical" evidence="1">
    <location>
        <begin position="64"/>
        <end position="84"/>
    </location>
</feature>
<proteinExistence type="inferred from homology"/>
<accession>Q49XE2</accession>
<comment type="function">
    <text evidence="1">Channel that opens in response to stretch forces in the membrane lipid bilayer. May participate in the regulation of osmotic pressure changes within the cell.</text>
</comment>
<comment type="subunit">
    <text evidence="1">Homopentamer.</text>
</comment>
<comment type="subcellular location">
    <subcellularLocation>
        <location evidence="1">Cell membrane</location>
        <topology evidence="1">Multi-pass membrane protein</topology>
    </subcellularLocation>
</comment>
<comment type="similarity">
    <text evidence="1">Belongs to the MscL family.</text>
</comment>